<sequence>MTIWVDADACPNVIKEILYRAAERMQMPLVLVANQSLRVPPSRFIRTLRVAAGFDVADNEIVRQCEAGDLVITADIPLAAEAIEKGAAALNSRGERYTPATIRERLTMRDFMDTLRASGIQTGGPDSLSQRDRQAFAAELEKWWLEVQRSRG</sequence>
<feature type="chain" id="PRO_0000176006" description="UPF0178 protein YaiI">
    <location>
        <begin position="1"/>
        <end position="152"/>
    </location>
</feature>
<comment type="similarity">
    <text evidence="1">Belongs to the UPF0178 family.</text>
</comment>
<comment type="sequence caution" evidence="2">
    <conflict type="erroneous initiation">
        <sequence resource="EMBL-CDS" id="AAN41982"/>
    </conflict>
</comment>
<comment type="sequence caution" evidence="2">
    <conflict type="erroneous initiation">
        <sequence resource="EMBL-CDS" id="AAP15860"/>
    </conflict>
</comment>
<protein>
    <recommendedName>
        <fullName evidence="1">UPF0178 protein YaiI</fullName>
    </recommendedName>
</protein>
<gene>
    <name evidence="1" type="primary">yaiI</name>
    <name type="ordered locus">SF0323</name>
    <name type="ordered locus">S0331</name>
</gene>
<organism>
    <name type="scientific">Shigella flexneri</name>
    <dbReference type="NCBI Taxonomy" id="623"/>
    <lineage>
        <taxon>Bacteria</taxon>
        <taxon>Pseudomonadati</taxon>
        <taxon>Pseudomonadota</taxon>
        <taxon>Gammaproteobacteria</taxon>
        <taxon>Enterobacterales</taxon>
        <taxon>Enterobacteriaceae</taxon>
        <taxon>Shigella</taxon>
    </lineage>
</organism>
<reference key="1">
    <citation type="journal article" date="2002" name="Nucleic Acids Res.">
        <title>Genome sequence of Shigella flexneri 2a: insights into pathogenicity through comparison with genomes of Escherichia coli K12 and O157.</title>
        <authorList>
            <person name="Jin Q."/>
            <person name="Yuan Z."/>
            <person name="Xu J."/>
            <person name="Wang Y."/>
            <person name="Shen Y."/>
            <person name="Lu W."/>
            <person name="Wang J."/>
            <person name="Liu H."/>
            <person name="Yang J."/>
            <person name="Yang F."/>
            <person name="Zhang X."/>
            <person name="Zhang J."/>
            <person name="Yang G."/>
            <person name="Wu H."/>
            <person name="Qu D."/>
            <person name="Dong J."/>
            <person name="Sun L."/>
            <person name="Xue Y."/>
            <person name="Zhao A."/>
            <person name="Gao Y."/>
            <person name="Zhu J."/>
            <person name="Kan B."/>
            <person name="Ding K."/>
            <person name="Chen S."/>
            <person name="Cheng H."/>
            <person name="Yao Z."/>
            <person name="He B."/>
            <person name="Chen R."/>
            <person name="Ma D."/>
            <person name="Qiang B."/>
            <person name="Wen Y."/>
            <person name="Hou Y."/>
            <person name="Yu J."/>
        </authorList>
    </citation>
    <scope>NUCLEOTIDE SEQUENCE [LARGE SCALE GENOMIC DNA]</scope>
    <source>
        <strain>301 / Serotype 2a</strain>
    </source>
</reference>
<reference key="2">
    <citation type="journal article" date="2003" name="Infect. Immun.">
        <title>Complete genome sequence and comparative genomics of Shigella flexneri serotype 2a strain 2457T.</title>
        <authorList>
            <person name="Wei J."/>
            <person name="Goldberg M.B."/>
            <person name="Burland V."/>
            <person name="Venkatesan M.M."/>
            <person name="Deng W."/>
            <person name="Fournier G."/>
            <person name="Mayhew G.F."/>
            <person name="Plunkett G. III"/>
            <person name="Rose D.J."/>
            <person name="Darling A."/>
            <person name="Mau B."/>
            <person name="Perna N.T."/>
            <person name="Payne S.M."/>
            <person name="Runyen-Janecky L.J."/>
            <person name="Zhou S."/>
            <person name="Schwartz D.C."/>
            <person name="Blattner F.R."/>
        </authorList>
    </citation>
    <scope>NUCLEOTIDE SEQUENCE [LARGE SCALE GENOMIC DNA]</scope>
    <source>
        <strain>ATCC 700930 / 2457T / Serotype 2a</strain>
    </source>
</reference>
<accession>Q83M67</accession>
<accession>Q7C2Z8</accession>
<name>YAII_SHIFL</name>
<evidence type="ECO:0000255" key="1">
    <source>
        <dbReference type="HAMAP-Rule" id="MF_00489"/>
    </source>
</evidence>
<evidence type="ECO:0000305" key="2"/>
<proteinExistence type="inferred from homology"/>
<keyword id="KW-1185">Reference proteome</keyword>
<dbReference type="EMBL" id="AE005674">
    <property type="protein sequence ID" value="AAN41982.1"/>
    <property type="status" value="ALT_INIT"/>
    <property type="molecule type" value="Genomic_DNA"/>
</dbReference>
<dbReference type="EMBL" id="AE014073">
    <property type="protein sequence ID" value="AAP15860.1"/>
    <property type="status" value="ALT_INIT"/>
    <property type="molecule type" value="Genomic_DNA"/>
</dbReference>
<dbReference type="RefSeq" id="WP_000158164.1">
    <property type="nucleotide sequence ID" value="NZ_WPGW01000023.1"/>
</dbReference>
<dbReference type="STRING" id="198214.SF0323"/>
<dbReference type="PaxDb" id="198214-SF0323"/>
<dbReference type="KEGG" id="sfx:S0331"/>
<dbReference type="PATRIC" id="fig|623.156.peg.3472"/>
<dbReference type="HOGENOM" id="CLU_106619_1_0_6"/>
<dbReference type="Proteomes" id="UP000001006">
    <property type="component" value="Chromosome"/>
</dbReference>
<dbReference type="Proteomes" id="UP000002673">
    <property type="component" value="Chromosome"/>
</dbReference>
<dbReference type="CDD" id="cd18720">
    <property type="entry name" value="PIN_YqxD-like"/>
    <property type="match status" value="1"/>
</dbReference>
<dbReference type="HAMAP" id="MF_00489">
    <property type="entry name" value="UPF0178"/>
    <property type="match status" value="1"/>
</dbReference>
<dbReference type="InterPro" id="IPR003791">
    <property type="entry name" value="UPF0178"/>
</dbReference>
<dbReference type="NCBIfam" id="NF001095">
    <property type="entry name" value="PRK00124.1"/>
    <property type="match status" value="1"/>
</dbReference>
<dbReference type="PANTHER" id="PTHR35146">
    <property type="entry name" value="UPF0178 PROTEIN YAII"/>
    <property type="match status" value="1"/>
</dbReference>
<dbReference type="PANTHER" id="PTHR35146:SF1">
    <property type="entry name" value="UPF0178 PROTEIN YAII"/>
    <property type="match status" value="1"/>
</dbReference>
<dbReference type="Pfam" id="PF02639">
    <property type="entry name" value="DUF188"/>
    <property type="match status" value="1"/>
</dbReference>